<sequence length="152" mass="15618">MDIIQHGGDPQVGNLATPINASAFSKAFINNLPGYRQGLSAQRRGLEVGMAHGYFLYGPFALLGPLRNADFAGVAGLLGTVGLISLLTLALSLYGSVGVSTPTATLTTPNPPENLGTKEGWSEFAAGFLIGGCGGALVAYGLCIALPMMYTI</sequence>
<organism>
    <name type="scientific">Picosynechococcus sp. (strain ATCC 27264 / PCC 7002 / PR-6)</name>
    <name type="common">Agmenellum quadruplicatum</name>
    <dbReference type="NCBI Taxonomy" id="32049"/>
    <lineage>
        <taxon>Bacteria</taxon>
        <taxon>Bacillati</taxon>
        <taxon>Cyanobacteriota</taxon>
        <taxon>Cyanophyceae</taxon>
        <taxon>Oscillatoriophycideae</taxon>
        <taxon>Chroococcales</taxon>
        <taxon>Geminocystaceae</taxon>
        <taxon>Picosynechococcus</taxon>
    </lineage>
</organism>
<evidence type="ECO:0000250" key="1"/>
<evidence type="ECO:0000255" key="2"/>
<evidence type="ECO:0000305" key="3"/>
<dbReference type="EMBL" id="U58035">
    <property type="protein sequence ID" value="AAB18910.1"/>
    <property type="molecule type" value="Genomic_DNA"/>
</dbReference>
<dbReference type="EMBL" id="CP000951">
    <property type="protein sequence ID" value="ACB00597.1"/>
    <property type="molecule type" value="Genomic_DNA"/>
</dbReference>
<dbReference type="RefSeq" id="WP_012308215.1">
    <property type="nucleotide sequence ID" value="NZ_JAHHPU010000003.1"/>
</dbReference>
<dbReference type="SMR" id="Q54753"/>
<dbReference type="STRING" id="32049.SYNPCC7002_A2620"/>
<dbReference type="KEGG" id="syp:SYNPCC7002_A2620"/>
<dbReference type="eggNOG" id="ENOG502ZMJ2">
    <property type="taxonomic scope" value="Bacteria"/>
</dbReference>
<dbReference type="HOGENOM" id="CLU_092204_1_0_3"/>
<dbReference type="Proteomes" id="UP000001688">
    <property type="component" value="Chromosome"/>
</dbReference>
<dbReference type="GO" id="GO:0009538">
    <property type="term" value="C:photosystem I reaction center"/>
    <property type="evidence" value="ECO:0007669"/>
    <property type="project" value="InterPro"/>
</dbReference>
<dbReference type="GO" id="GO:0031676">
    <property type="term" value="C:plasma membrane-derived thylakoid membrane"/>
    <property type="evidence" value="ECO:0007669"/>
    <property type="project" value="UniProtKB-SubCell"/>
</dbReference>
<dbReference type="GO" id="GO:0015979">
    <property type="term" value="P:photosynthesis"/>
    <property type="evidence" value="ECO:0007669"/>
    <property type="project" value="UniProtKB-UniRule"/>
</dbReference>
<dbReference type="Gene3D" id="1.20.1240.10">
    <property type="entry name" value="Photosystem I PsaL, reaction centre subunit XI"/>
    <property type="match status" value="1"/>
</dbReference>
<dbReference type="HAMAP" id="MF_00447">
    <property type="entry name" value="PSI_PsaL"/>
    <property type="match status" value="1"/>
</dbReference>
<dbReference type="InterPro" id="IPR003757">
    <property type="entry name" value="PSI_PsaL"/>
</dbReference>
<dbReference type="InterPro" id="IPR036592">
    <property type="entry name" value="PSI_PsaL_sf"/>
</dbReference>
<dbReference type="InterPro" id="IPR022980">
    <property type="entry name" value="PSI_suXI"/>
</dbReference>
<dbReference type="PANTHER" id="PTHR34803">
    <property type="entry name" value="PHOTOSYSTEM I REACTION CENTER SUBUNIT XI, CHLOROPLASTIC"/>
    <property type="match status" value="1"/>
</dbReference>
<dbReference type="PANTHER" id="PTHR34803:SF2">
    <property type="entry name" value="PHOTOSYSTEM I REACTION CENTER SUBUNIT XI, CHLOROPLASTIC"/>
    <property type="match status" value="1"/>
</dbReference>
<dbReference type="Pfam" id="PF02605">
    <property type="entry name" value="PsaL"/>
    <property type="match status" value="1"/>
</dbReference>
<dbReference type="SUPFAM" id="SSF81568">
    <property type="entry name" value="Photosystem I reaction center subunit XI, PsaL"/>
    <property type="match status" value="1"/>
</dbReference>
<feature type="chain" id="PRO_0000194700" description="Photosystem I reaction center subunit XI">
    <location>
        <begin position="1"/>
        <end position="152"/>
    </location>
</feature>
<feature type="transmembrane region" description="Helical" evidence="2">
    <location>
        <begin position="71"/>
        <end position="91"/>
    </location>
</feature>
<feature type="transmembrane region" description="Helical" evidence="2">
    <location>
        <begin position="124"/>
        <end position="144"/>
    </location>
</feature>
<keyword id="KW-0472">Membrane</keyword>
<keyword id="KW-0602">Photosynthesis</keyword>
<keyword id="KW-0603">Photosystem I</keyword>
<keyword id="KW-1185">Reference proteome</keyword>
<keyword id="KW-0793">Thylakoid</keyword>
<keyword id="KW-0812">Transmembrane</keyword>
<keyword id="KW-1133">Transmembrane helix</keyword>
<reference key="1">
    <citation type="journal article" date="1996" name="Photochem. Photobiol.">
        <title>Characterization of psaI and psaL mutants of Synechococcus sp. strain PCC 7002: a new model for state transitions in cyanobacteria.</title>
        <authorList>
            <person name="Schluchter W.M."/>
            <person name="Shen G."/>
            <person name="Zhao J."/>
            <person name="Bryant D.A."/>
        </authorList>
    </citation>
    <scope>NUCLEOTIDE SEQUENCE [GENOMIC DNA]</scope>
</reference>
<reference key="2">
    <citation type="submission" date="2008-02" db="EMBL/GenBank/DDBJ databases">
        <title>Complete sequence of Synechococcus sp. PCC 7002.</title>
        <authorList>
            <person name="Li T."/>
            <person name="Zhao J."/>
            <person name="Zhao C."/>
            <person name="Liu Z."/>
            <person name="Zhao F."/>
            <person name="Marquardt J."/>
            <person name="Nomura C.T."/>
            <person name="Persson S."/>
            <person name="Detter J.C."/>
            <person name="Richardson P.M."/>
            <person name="Lanz C."/>
            <person name="Schuster S.C."/>
            <person name="Wang J."/>
            <person name="Li S."/>
            <person name="Huang X."/>
            <person name="Cai T."/>
            <person name="Yu Z."/>
            <person name="Luo J."/>
            <person name="Zhao J."/>
            <person name="Bryant D.A."/>
        </authorList>
    </citation>
    <scope>NUCLEOTIDE SEQUENCE [LARGE SCALE GENOMIC DNA]</scope>
    <source>
        <strain>ATCC 27264 / PCC 7002 / PR-6</strain>
    </source>
</reference>
<name>PSAL_PICP2</name>
<comment type="subcellular location">
    <subcellularLocation>
        <location evidence="1">Cellular thylakoid membrane</location>
        <topology evidence="1">Multi-pass membrane protein</topology>
    </subcellularLocation>
</comment>
<comment type="similarity">
    <text evidence="3">Belongs to the PsaL family.</text>
</comment>
<proteinExistence type="inferred from homology"/>
<protein>
    <recommendedName>
        <fullName>Photosystem I reaction center subunit XI</fullName>
    </recommendedName>
    <alternativeName>
        <fullName>PSI subunit V</fullName>
    </alternativeName>
    <alternativeName>
        <fullName>PSI-L</fullName>
    </alternativeName>
</protein>
<gene>
    <name type="primary">psaL</name>
    <name type="ordered locus">SYNPCC7002_A2620</name>
</gene>
<accession>Q54753</accession>
<accession>B1XLB0</accession>